<keyword id="KW-0050">Antiport</keyword>
<keyword id="KW-0150">Chloroplast</keyword>
<keyword id="KW-0375">Hydrogen ion transport</keyword>
<keyword id="KW-0406">Ion transport</keyword>
<keyword id="KW-0472">Membrane</keyword>
<keyword id="KW-0934">Plastid</keyword>
<keyword id="KW-1001">Plastid inner membrane</keyword>
<keyword id="KW-0630">Potassium</keyword>
<keyword id="KW-0633">Potassium transport</keyword>
<keyword id="KW-0691">RNA editing</keyword>
<keyword id="KW-0812">Transmembrane</keyword>
<keyword id="KW-1133">Transmembrane helix</keyword>
<keyword id="KW-0813">Transport</keyword>
<organism>
    <name type="scientific">Adiantum capillus-veneris</name>
    <name type="common">Maidenhair fern</name>
    <dbReference type="NCBI Taxonomy" id="13818"/>
    <lineage>
        <taxon>Eukaryota</taxon>
        <taxon>Viridiplantae</taxon>
        <taxon>Streptophyta</taxon>
        <taxon>Embryophyta</taxon>
        <taxon>Tracheophyta</taxon>
        <taxon>Polypodiopsida</taxon>
        <taxon>Polypodiidae</taxon>
        <taxon>Polypodiales</taxon>
        <taxon>Pteridineae</taxon>
        <taxon>Pteridaceae</taxon>
        <taxon>Vittarioideae</taxon>
        <taxon>Adiantum</taxon>
    </lineage>
</organism>
<gene>
    <name evidence="1" type="primary">cemA</name>
    <name type="synonym">ycf10</name>
</gene>
<geneLocation type="chloroplast"/>
<comment type="function">
    <text evidence="1">Contributes to K(+)/H(+) antiport activity by supporting proton efflux to control proton extrusion and homeostasis in chloroplasts in a light-dependent manner to modulate photosynthesis. Prevents excessive induction of non-photochemical quenching (NPQ) under continuous-light conditions. Indirectly promotes efficient inorganic carbon uptake into chloroplasts.</text>
</comment>
<comment type="catalytic activity">
    <reaction evidence="1">
        <text>K(+)(in) + H(+)(out) = K(+)(out) + H(+)(in)</text>
        <dbReference type="Rhea" id="RHEA:29467"/>
        <dbReference type="ChEBI" id="CHEBI:15378"/>
        <dbReference type="ChEBI" id="CHEBI:29103"/>
    </reaction>
</comment>
<comment type="subcellular location">
    <subcellularLocation>
        <location evidence="1">Plastid</location>
        <location evidence="1">Chloroplast inner membrane</location>
        <topology evidence="1">Multi-pass membrane protein</topology>
    </subcellularLocation>
</comment>
<comment type="RNA editing">
    <location>
        <position position="303" evidence="2"/>
    </location>
    <location>
        <position position="333" evidence="2"/>
    </location>
    <location>
        <position position="372" evidence="2"/>
    </location>
    <location>
        <position position="376" evidence="2"/>
    </location>
    <location>
        <position position="427" evidence="2"/>
    </location>
</comment>
<comment type="similarity">
    <text evidence="1 3">Belongs to the CemA family.</text>
</comment>
<sequence length="464" mass="53857">MAAGNSSWARAAFTFKATVFKKSRYVIYYSLLEHRFSLSLWGILKYSGIYFCTEILRSFPKKRCKSHPYRVDGYPAGSCLDPPLHEPLDTSTPKKISLVSCSNSYMRNKTDNGKVGSRNVSEYKLEGDFASTSKSIYYKLNNLEKMNRKLAWIEAVSSEFSFWEKLRSKQIFPFQNEKDLIAEPFNYELAVSHRRPVIYESISLVPRSVTRTLSRFKAELTNQSNLNLSVHNKFDLAKNQASVSLQYVGFLLFLFPIQIAIENWFLEPRIRGWWNIRQIQLFSNVFQEENALKQLREAEALFWLDDVIGNLADTQLQNFDTDARNETTRLAMMYDELNIQLLLRLATNAISIATLFPLLIFGRKRLAVLNSWIQELFYSLNDTMKAFSILLLTDLCVGFHSPHGWEILVQSLFEYFGLTPNKYVTPCFVSTFPVILDTLFKYWIFRHLNRTSPSIVATYHTMSE</sequence>
<name>CEMA_ADICA</name>
<reference key="1">
    <citation type="journal article" date="2003" name="DNA Res.">
        <title>Complete nucleotide sequence of the chloroplast genome from a leptosporangiate fern, Adiantum capillus-veneris L.</title>
        <authorList>
            <person name="Wolf P.G."/>
            <person name="Rowe C.A."/>
            <person name="Sinclair R.B."/>
            <person name="Hasebe M."/>
        </authorList>
    </citation>
    <scope>NUCLEOTIDE SEQUENCE [LARGE SCALE GENOMIC DNA]</scope>
</reference>
<reference key="2">
    <citation type="journal article" date="2004" name="Gene">
        <title>High levels of RNA editing in a vascular plant chloroplast genome: analysis of transcripts from the fern Adiantum capillus-veneris.</title>
        <authorList>
            <person name="Wolf P.G."/>
            <person name="Rowe C.A."/>
            <person name="Hasebe M."/>
        </authorList>
    </citation>
    <scope>NUCLEOTIDE SEQUENCE [GENOMIC DNA]</scope>
    <scope>RNA EDITING</scope>
    <source>
        <tissue>Frond</tissue>
    </source>
</reference>
<dbReference type="EMBL" id="AY178864">
    <property type="protein sequence ID" value="AAP29403.2"/>
    <property type="molecule type" value="Genomic_DNA"/>
</dbReference>
<dbReference type="RefSeq" id="NP_848072.2">
    <property type="nucleotide sequence ID" value="NC_004766.1"/>
</dbReference>
<dbReference type="SMR" id="Q85FL0"/>
<dbReference type="GeneID" id="807373"/>
<dbReference type="GO" id="GO:0009706">
    <property type="term" value="C:chloroplast inner membrane"/>
    <property type="evidence" value="ECO:0007669"/>
    <property type="project" value="UniProtKB-SubCell"/>
</dbReference>
<dbReference type="GO" id="GO:0015297">
    <property type="term" value="F:antiporter activity"/>
    <property type="evidence" value="ECO:0007669"/>
    <property type="project" value="UniProtKB-KW"/>
</dbReference>
<dbReference type="GO" id="GO:0015078">
    <property type="term" value="F:proton transmembrane transporter activity"/>
    <property type="evidence" value="ECO:0007669"/>
    <property type="project" value="UniProtKB-UniRule"/>
</dbReference>
<dbReference type="GO" id="GO:0006813">
    <property type="term" value="P:potassium ion transport"/>
    <property type="evidence" value="ECO:0007669"/>
    <property type="project" value="UniProtKB-UniRule"/>
</dbReference>
<dbReference type="HAMAP" id="MF_01308">
    <property type="entry name" value="CemA_PxcA"/>
    <property type="match status" value="1"/>
</dbReference>
<dbReference type="InterPro" id="IPR004282">
    <property type="entry name" value="CemA"/>
</dbReference>
<dbReference type="PANTHER" id="PTHR33650:SF2">
    <property type="entry name" value="CHLOROPLAST ENVELOPE MEMBRANE PROTEIN"/>
    <property type="match status" value="1"/>
</dbReference>
<dbReference type="PANTHER" id="PTHR33650">
    <property type="entry name" value="CHLOROPLAST ENVELOPE MEMBRANE PROTEIN-RELATED"/>
    <property type="match status" value="1"/>
</dbReference>
<dbReference type="Pfam" id="PF03040">
    <property type="entry name" value="CemA"/>
    <property type="match status" value="1"/>
</dbReference>
<proteinExistence type="evidence at transcript level"/>
<accession>Q85FL0</accession>
<feature type="chain" id="PRO_0000216628" description="Potassium/proton antiporter CemA">
    <location>
        <begin position="1"/>
        <end position="464"/>
    </location>
</feature>
<feature type="transmembrane region" description="Helical" evidence="1">
    <location>
        <begin position="36"/>
        <end position="56"/>
    </location>
</feature>
<feature type="transmembrane region" description="Helical" evidence="1">
    <location>
        <begin position="241"/>
        <end position="261"/>
    </location>
</feature>
<feature type="transmembrane region" description="Helical" evidence="1">
    <location>
        <begin position="341"/>
        <end position="361"/>
    </location>
</feature>
<feature type="transmembrane region" description="Helical" evidence="1">
    <location>
        <begin position="389"/>
        <end position="409"/>
    </location>
</feature>
<feature type="transmembrane region" description="Helical" evidence="1">
    <location>
        <begin position="425"/>
        <end position="445"/>
    </location>
</feature>
<evidence type="ECO:0000255" key="1">
    <source>
        <dbReference type="HAMAP-Rule" id="MF_01308"/>
    </source>
</evidence>
<evidence type="ECO:0000269" key="2">
    <source>
    </source>
</evidence>
<evidence type="ECO:0000305" key="3"/>
<protein>
    <recommendedName>
        <fullName evidence="1">Potassium/proton antiporter CemA</fullName>
    </recommendedName>
    <alternativeName>
        <fullName evidence="1">Chloroplast envelope membrane protein A</fullName>
        <shortName evidence="1">CemA</shortName>
    </alternativeName>
</protein>